<organism>
    <name type="scientific">Yersinia pestis</name>
    <dbReference type="NCBI Taxonomy" id="632"/>
    <lineage>
        <taxon>Bacteria</taxon>
        <taxon>Pseudomonadati</taxon>
        <taxon>Pseudomonadota</taxon>
        <taxon>Gammaproteobacteria</taxon>
        <taxon>Enterobacterales</taxon>
        <taxon>Yersiniaceae</taxon>
        <taxon>Yersinia</taxon>
    </lineage>
</organism>
<reference key="1">
    <citation type="journal article" date="2001" name="Nature">
        <title>Genome sequence of Yersinia pestis, the causative agent of plague.</title>
        <authorList>
            <person name="Parkhill J."/>
            <person name="Wren B.W."/>
            <person name="Thomson N.R."/>
            <person name="Titball R.W."/>
            <person name="Holden M.T.G."/>
            <person name="Prentice M.B."/>
            <person name="Sebaihia M."/>
            <person name="James K.D."/>
            <person name="Churcher C.M."/>
            <person name="Mungall K.L."/>
            <person name="Baker S."/>
            <person name="Basham D."/>
            <person name="Bentley S.D."/>
            <person name="Brooks K."/>
            <person name="Cerdeno-Tarraga A.-M."/>
            <person name="Chillingworth T."/>
            <person name="Cronin A."/>
            <person name="Davies R.M."/>
            <person name="Davis P."/>
            <person name="Dougan G."/>
            <person name="Feltwell T."/>
            <person name="Hamlin N."/>
            <person name="Holroyd S."/>
            <person name="Jagels K."/>
            <person name="Karlyshev A.V."/>
            <person name="Leather S."/>
            <person name="Moule S."/>
            <person name="Oyston P.C.F."/>
            <person name="Quail M.A."/>
            <person name="Rutherford K.M."/>
            <person name="Simmonds M."/>
            <person name="Skelton J."/>
            <person name="Stevens K."/>
            <person name="Whitehead S."/>
            <person name="Barrell B.G."/>
        </authorList>
    </citation>
    <scope>NUCLEOTIDE SEQUENCE [LARGE SCALE GENOMIC DNA]</scope>
    <source>
        <strain>CO-92 / Biovar Orientalis</strain>
    </source>
</reference>
<reference key="2">
    <citation type="journal article" date="2002" name="J. Bacteriol.">
        <title>Genome sequence of Yersinia pestis KIM.</title>
        <authorList>
            <person name="Deng W."/>
            <person name="Burland V."/>
            <person name="Plunkett G. III"/>
            <person name="Boutin A."/>
            <person name="Mayhew G.F."/>
            <person name="Liss P."/>
            <person name="Perna N.T."/>
            <person name="Rose D.J."/>
            <person name="Mau B."/>
            <person name="Zhou S."/>
            <person name="Schwartz D.C."/>
            <person name="Fetherston J.D."/>
            <person name="Lindler L.E."/>
            <person name="Brubaker R.R."/>
            <person name="Plano G.V."/>
            <person name="Straley S.C."/>
            <person name="McDonough K.A."/>
            <person name="Nilles M.L."/>
            <person name="Matson J.S."/>
            <person name="Blattner F.R."/>
            <person name="Perry R.D."/>
        </authorList>
    </citation>
    <scope>NUCLEOTIDE SEQUENCE [LARGE SCALE GENOMIC DNA]</scope>
    <source>
        <strain>KIM10+ / Biovar Mediaevalis</strain>
    </source>
</reference>
<reference key="3">
    <citation type="journal article" date="2004" name="DNA Res.">
        <title>Complete genome sequence of Yersinia pestis strain 91001, an isolate avirulent to humans.</title>
        <authorList>
            <person name="Song Y."/>
            <person name="Tong Z."/>
            <person name="Wang J."/>
            <person name="Wang L."/>
            <person name="Guo Z."/>
            <person name="Han Y."/>
            <person name="Zhang J."/>
            <person name="Pei D."/>
            <person name="Zhou D."/>
            <person name="Qin H."/>
            <person name="Pang X."/>
            <person name="Han Y."/>
            <person name="Zhai J."/>
            <person name="Li M."/>
            <person name="Cui B."/>
            <person name="Qi Z."/>
            <person name="Jin L."/>
            <person name="Dai R."/>
            <person name="Chen F."/>
            <person name="Li S."/>
            <person name="Ye C."/>
            <person name="Du Z."/>
            <person name="Lin W."/>
            <person name="Wang J."/>
            <person name="Yu J."/>
            <person name="Yang H."/>
            <person name="Wang J."/>
            <person name="Huang P."/>
            <person name="Yang R."/>
        </authorList>
    </citation>
    <scope>NUCLEOTIDE SEQUENCE [LARGE SCALE GENOMIC DNA]</scope>
    <source>
        <strain>91001 / Biovar Mediaevalis</strain>
    </source>
</reference>
<sequence length="61" mass="6853">MLILTRRVGETLMIGDEVTVTVLGVKGNQVRIGVNAPKEVSVHREEIYQRIQAEKSQPTTY</sequence>
<feature type="chain" id="PRO_0000177104" description="Translational regulator CsrA">
    <location>
        <begin position="1"/>
        <end position="61"/>
    </location>
</feature>
<proteinExistence type="inferred from homology"/>
<name>CSRA_YERPE</name>
<dbReference type="EMBL" id="AL590842">
    <property type="protein sequence ID" value="CAL21895.1"/>
    <property type="molecule type" value="Genomic_DNA"/>
</dbReference>
<dbReference type="EMBL" id="AE009952">
    <property type="protein sequence ID" value="AAM84468.1"/>
    <property type="molecule type" value="Genomic_DNA"/>
</dbReference>
<dbReference type="EMBL" id="AE017042">
    <property type="protein sequence ID" value="AAS60655.1"/>
    <property type="molecule type" value="Genomic_DNA"/>
</dbReference>
<dbReference type="PIR" id="AD0401">
    <property type="entry name" value="AD0401"/>
</dbReference>
<dbReference type="RefSeq" id="WP_002209449.1">
    <property type="nucleotide sequence ID" value="NZ_WUCM01000060.1"/>
</dbReference>
<dbReference type="RefSeq" id="YP_002348200.1">
    <property type="nucleotide sequence ID" value="NC_003143.1"/>
</dbReference>
<dbReference type="SMR" id="P63876"/>
<dbReference type="STRING" id="214092.YPO3304"/>
<dbReference type="PaxDb" id="214092-YPO3304"/>
<dbReference type="DNASU" id="1145831"/>
<dbReference type="EnsemblBacteria" id="AAS60655">
    <property type="protein sequence ID" value="AAS60655"/>
    <property type="gene ID" value="YP_0382"/>
</dbReference>
<dbReference type="GeneID" id="97457422"/>
<dbReference type="KEGG" id="ype:YPO3304"/>
<dbReference type="KEGG" id="ypk:y0884"/>
<dbReference type="KEGG" id="ypm:YP_0382"/>
<dbReference type="PATRIC" id="fig|214092.21.peg.3774"/>
<dbReference type="eggNOG" id="COG1551">
    <property type="taxonomic scope" value="Bacteria"/>
</dbReference>
<dbReference type="HOGENOM" id="CLU_164837_2_1_6"/>
<dbReference type="OMA" id="VYRKEVY"/>
<dbReference type="Proteomes" id="UP000000815">
    <property type="component" value="Chromosome"/>
</dbReference>
<dbReference type="Proteomes" id="UP000001019">
    <property type="component" value="Chromosome"/>
</dbReference>
<dbReference type="Proteomes" id="UP000002490">
    <property type="component" value="Chromosome"/>
</dbReference>
<dbReference type="GO" id="GO:0005829">
    <property type="term" value="C:cytosol"/>
    <property type="evidence" value="ECO:0000318"/>
    <property type="project" value="GO_Central"/>
</dbReference>
<dbReference type="GO" id="GO:0048027">
    <property type="term" value="F:mRNA 5'-UTR binding"/>
    <property type="evidence" value="ECO:0007669"/>
    <property type="project" value="UniProtKB-UniRule"/>
</dbReference>
<dbReference type="GO" id="GO:0006402">
    <property type="term" value="P:mRNA catabolic process"/>
    <property type="evidence" value="ECO:0007669"/>
    <property type="project" value="InterPro"/>
</dbReference>
<dbReference type="GO" id="GO:0045947">
    <property type="term" value="P:negative regulation of translational initiation"/>
    <property type="evidence" value="ECO:0007669"/>
    <property type="project" value="UniProtKB-UniRule"/>
</dbReference>
<dbReference type="GO" id="GO:0045948">
    <property type="term" value="P:positive regulation of translational initiation"/>
    <property type="evidence" value="ECO:0007669"/>
    <property type="project" value="UniProtKB-UniRule"/>
</dbReference>
<dbReference type="GO" id="GO:0006109">
    <property type="term" value="P:regulation of carbohydrate metabolic process"/>
    <property type="evidence" value="ECO:0007669"/>
    <property type="project" value="UniProtKB-UniRule"/>
</dbReference>
<dbReference type="FunFam" id="2.60.40.4380:FF:000001">
    <property type="entry name" value="Translational regulator CsrA"/>
    <property type="match status" value="1"/>
</dbReference>
<dbReference type="Gene3D" id="2.60.40.4380">
    <property type="entry name" value="Translational regulator CsrA"/>
    <property type="match status" value="1"/>
</dbReference>
<dbReference type="HAMAP" id="MF_00167">
    <property type="entry name" value="CsrA"/>
    <property type="match status" value="1"/>
</dbReference>
<dbReference type="InterPro" id="IPR003751">
    <property type="entry name" value="CsrA"/>
</dbReference>
<dbReference type="InterPro" id="IPR036107">
    <property type="entry name" value="CsrA_sf"/>
</dbReference>
<dbReference type="NCBIfam" id="TIGR00202">
    <property type="entry name" value="csrA"/>
    <property type="match status" value="1"/>
</dbReference>
<dbReference type="NCBIfam" id="NF002469">
    <property type="entry name" value="PRK01712.1"/>
    <property type="match status" value="1"/>
</dbReference>
<dbReference type="PANTHER" id="PTHR34984">
    <property type="entry name" value="CARBON STORAGE REGULATOR"/>
    <property type="match status" value="1"/>
</dbReference>
<dbReference type="PANTHER" id="PTHR34984:SF1">
    <property type="entry name" value="CARBON STORAGE REGULATOR"/>
    <property type="match status" value="1"/>
</dbReference>
<dbReference type="Pfam" id="PF02599">
    <property type="entry name" value="CsrA"/>
    <property type="match status" value="1"/>
</dbReference>
<dbReference type="SUPFAM" id="SSF117130">
    <property type="entry name" value="CsrA-like"/>
    <property type="match status" value="1"/>
</dbReference>
<accession>P63876</accession>
<accession>Q0WBY8</accession>
<accession>Q8ZBT9</accession>
<evidence type="ECO:0000255" key="1">
    <source>
        <dbReference type="HAMAP-Rule" id="MF_00167"/>
    </source>
</evidence>
<keyword id="KW-0010">Activator</keyword>
<keyword id="KW-0963">Cytoplasm</keyword>
<keyword id="KW-1185">Reference proteome</keyword>
<keyword id="KW-0678">Repressor</keyword>
<keyword id="KW-0694">RNA-binding</keyword>
<keyword id="KW-0810">Translation regulation</keyword>
<protein>
    <recommendedName>
        <fullName evidence="1">Translational regulator CsrA</fullName>
    </recommendedName>
    <alternativeName>
        <fullName evidence="1">Carbon storage regulator</fullName>
    </alternativeName>
</protein>
<comment type="function">
    <text evidence="1">A key translational regulator that binds mRNA to regulate translation initiation and/or mRNA stability. Mediates global changes in gene expression, shifting from rapid growth to stress survival by linking envelope stress, the stringent response and the catabolite repression systems. Usually binds in the 5'-UTR; binding at or near the Shine-Dalgarno sequence prevents ribosome-binding, repressing translation, binding elsewhere in the 5'-UTR can activate translation and/or stabilize the mRNA. Its function is antagonized by small RNA(s).</text>
</comment>
<comment type="subunit">
    <text evidence="1">Homodimer; the beta-strands of each monomer intercalate to form a hydrophobic core, while the alpha-helices form wings that extend away from the core.</text>
</comment>
<comment type="subcellular location">
    <subcellularLocation>
        <location evidence="1">Cytoplasm</location>
    </subcellularLocation>
</comment>
<comment type="similarity">
    <text evidence="1">Belongs to the CsrA/RsmA family.</text>
</comment>
<gene>
    <name evidence="1" type="primary">csrA</name>
    <name type="ordered locus">YPO3304</name>
    <name type="ordered locus">y0884</name>
    <name type="ordered locus">YP_0382</name>
</gene>